<organism>
    <name type="scientific">Nocardia farcinica (strain IFM 10152)</name>
    <dbReference type="NCBI Taxonomy" id="247156"/>
    <lineage>
        <taxon>Bacteria</taxon>
        <taxon>Bacillati</taxon>
        <taxon>Actinomycetota</taxon>
        <taxon>Actinomycetes</taxon>
        <taxon>Mycobacteriales</taxon>
        <taxon>Nocardiaceae</taxon>
        <taxon>Nocardia</taxon>
    </lineage>
</organism>
<comment type="function">
    <text evidence="1">Aminotransferase that catalyzes the conversion of aromatic amino acids and 2-oxoglutarate into corresponding aromatic oxo acids and L-glutamate.</text>
</comment>
<comment type="catalytic activity">
    <reaction evidence="1">
        <text>an aromatic L-alpha-amino acid + 2-oxoglutarate = an aromatic oxo-acid + L-glutamate</text>
        <dbReference type="Rhea" id="RHEA:17533"/>
        <dbReference type="ChEBI" id="CHEBI:16810"/>
        <dbReference type="ChEBI" id="CHEBI:29985"/>
        <dbReference type="ChEBI" id="CHEBI:73309"/>
        <dbReference type="ChEBI" id="CHEBI:84824"/>
        <dbReference type="EC" id="2.6.1.57"/>
    </reaction>
</comment>
<comment type="cofactor">
    <cofactor evidence="1">
        <name>pyridoxal 5'-phosphate</name>
        <dbReference type="ChEBI" id="CHEBI:597326"/>
    </cofactor>
</comment>
<comment type="subunit">
    <text evidence="1">Homodimer.</text>
</comment>
<comment type="similarity">
    <text evidence="1">Belongs to the class-II pyridoxal-phosphate-dependent aminotransferase family.</text>
</comment>
<reference key="1">
    <citation type="journal article" date="2004" name="Proc. Natl. Acad. Sci. U.S.A.">
        <title>The complete genomic sequence of Nocardia farcinica IFM 10152.</title>
        <authorList>
            <person name="Ishikawa J."/>
            <person name="Yamashita A."/>
            <person name="Mikami Y."/>
            <person name="Hoshino Y."/>
            <person name="Kurita H."/>
            <person name="Hotta K."/>
            <person name="Shiba T."/>
            <person name="Hattori M."/>
        </authorList>
    </citation>
    <scope>NUCLEOTIDE SEQUENCE [LARGE SCALE GENOMIC DNA]</scope>
    <source>
        <strain>IFM 10152</strain>
    </source>
</reference>
<accession>Q5Z3C0</accession>
<name>PATR_NOCFA</name>
<gene>
    <name evidence="1" type="primary">pat</name>
    <name type="synonym">hisC2</name>
    <name type="ordered locus">NFA_2290</name>
</gene>
<dbReference type="EC" id="2.6.1.57" evidence="1"/>
<dbReference type="EMBL" id="AP006618">
    <property type="protein sequence ID" value="BAD55071.1"/>
    <property type="molecule type" value="Genomic_DNA"/>
</dbReference>
<dbReference type="RefSeq" id="WP_011206758.1">
    <property type="nucleotide sequence ID" value="NC_006361.1"/>
</dbReference>
<dbReference type="SMR" id="Q5Z3C0"/>
<dbReference type="STRING" id="247156.NFA_2290"/>
<dbReference type="GeneID" id="61131075"/>
<dbReference type="KEGG" id="nfa:NFA_2290"/>
<dbReference type="eggNOG" id="COG0079">
    <property type="taxonomic scope" value="Bacteria"/>
</dbReference>
<dbReference type="HOGENOM" id="CLU_017584_3_3_11"/>
<dbReference type="OrthoDB" id="9809616at2"/>
<dbReference type="Proteomes" id="UP000006820">
    <property type="component" value="Chromosome"/>
</dbReference>
<dbReference type="GO" id="GO:0008793">
    <property type="term" value="F:aromatic-amino-acid transaminase activity"/>
    <property type="evidence" value="ECO:0007669"/>
    <property type="project" value="UniProtKB-UniRule"/>
</dbReference>
<dbReference type="GO" id="GO:0004400">
    <property type="term" value="F:histidinol-phosphate transaminase activity"/>
    <property type="evidence" value="ECO:0007669"/>
    <property type="project" value="InterPro"/>
</dbReference>
<dbReference type="GO" id="GO:0030170">
    <property type="term" value="F:pyridoxal phosphate binding"/>
    <property type="evidence" value="ECO:0007669"/>
    <property type="project" value="UniProtKB-UniRule"/>
</dbReference>
<dbReference type="GO" id="GO:0000105">
    <property type="term" value="P:L-histidine biosynthetic process"/>
    <property type="evidence" value="ECO:0007669"/>
    <property type="project" value="InterPro"/>
</dbReference>
<dbReference type="CDD" id="cd00609">
    <property type="entry name" value="AAT_like"/>
    <property type="match status" value="1"/>
</dbReference>
<dbReference type="Gene3D" id="3.90.1150.10">
    <property type="entry name" value="Aspartate Aminotransferase, domain 1"/>
    <property type="match status" value="1"/>
</dbReference>
<dbReference type="Gene3D" id="3.40.640.10">
    <property type="entry name" value="Type I PLP-dependent aspartate aminotransferase-like (Major domain)"/>
    <property type="match status" value="1"/>
</dbReference>
<dbReference type="HAMAP" id="MF_01023">
    <property type="entry name" value="HisC_aminotrans_2"/>
    <property type="match status" value="1"/>
</dbReference>
<dbReference type="HAMAP" id="MF_01513">
    <property type="entry name" value="Phe_aminotrans_2"/>
    <property type="match status" value="1"/>
</dbReference>
<dbReference type="InterPro" id="IPR001917">
    <property type="entry name" value="Aminotrans_II_pyridoxalP_BS"/>
</dbReference>
<dbReference type="InterPro" id="IPR004839">
    <property type="entry name" value="Aminotransferase_I/II_large"/>
</dbReference>
<dbReference type="InterPro" id="IPR024892">
    <property type="entry name" value="ArAT"/>
</dbReference>
<dbReference type="InterPro" id="IPR005861">
    <property type="entry name" value="HisP_aminotrans"/>
</dbReference>
<dbReference type="InterPro" id="IPR050106">
    <property type="entry name" value="HistidinolP_aminotransfase"/>
</dbReference>
<dbReference type="InterPro" id="IPR015424">
    <property type="entry name" value="PyrdxlP-dep_Trfase"/>
</dbReference>
<dbReference type="InterPro" id="IPR015421">
    <property type="entry name" value="PyrdxlP-dep_Trfase_major"/>
</dbReference>
<dbReference type="InterPro" id="IPR015422">
    <property type="entry name" value="PyrdxlP-dep_Trfase_small"/>
</dbReference>
<dbReference type="NCBIfam" id="TIGR01141">
    <property type="entry name" value="hisC"/>
    <property type="match status" value="1"/>
</dbReference>
<dbReference type="NCBIfam" id="NF002878">
    <property type="entry name" value="PRK03321.1"/>
    <property type="match status" value="1"/>
</dbReference>
<dbReference type="PANTHER" id="PTHR43643:SF3">
    <property type="entry name" value="HISTIDINOL-PHOSPHATE AMINOTRANSFERASE"/>
    <property type="match status" value="1"/>
</dbReference>
<dbReference type="PANTHER" id="PTHR43643">
    <property type="entry name" value="HISTIDINOL-PHOSPHATE AMINOTRANSFERASE 2"/>
    <property type="match status" value="1"/>
</dbReference>
<dbReference type="Pfam" id="PF00155">
    <property type="entry name" value="Aminotran_1_2"/>
    <property type="match status" value="1"/>
</dbReference>
<dbReference type="SUPFAM" id="SSF53383">
    <property type="entry name" value="PLP-dependent transferases"/>
    <property type="match status" value="1"/>
</dbReference>
<dbReference type="PROSITE" id="PS00599">
    <property type="entry name" value="AA_TRANSFER_CLASS_2"/>
    <property type="match status" value="1"/>
</dbReference>
<protein>
    <recommendedName>
        <fullName evidence="1">Aromatic amino acid aminotransferase</fullName>
        <shortName evidence="1">ArAT</shortName>
        <ecNumber evidence="1">2.6.1.57</ecNumber>
    </recommendedName>
</protein>
<feature type="chain" id="PRO_0000153518" description="Aromatic amino acid aminotransferase">
    <location>
        <begin position="1"/>
        <end position="358"/>
    </location>
</feature>
<feature type="modified residue" description="N6-(pyridoxal phosphate)lysine" evidence="1">
    <location>
        <position position="219"/>
    </location>
</feature>
<proteinExistence type="inferred from homology"/>
<sequence>MSARIRPDLSSIPAYTPGRSNPGAVKLASNETTLPPLPAAAKAIAEAAELAHRYPDNQSGELRAALAEFLGVRVENVAIGCGSVALCQELVQITCSSPRDEVLFAWRSFEAYPIITQVGNATAVQVPLSPDYAHDLDALAAAVTEHTRLIFVCNPNNPTGTAHGRAALERFLDAVPAHVLVVLDEAYYEYMRLTPQDRPDGVEVGRNRPNVVVLRTFSKAYGLAGLRVGYAVGDPEVITALMKVHIPFSVNRVAQAAAIASLEARHELLERTEAVIVERERLREALLAAGYDVPPSETNFVWLPLGAHSAEFGEASAAAGVLVRPYGTDGVRVTVGDPHENEMFLRFAADPAVVARFR</sequence>
<keyword id="KW-0032">Aminotransferase</keyword>
<keyword id="KW-0663">Pyridoxal phosphate</keyword>
<keyword id="KW-1185">Reference proteome</keyword>
<keyword id="KW-0808">Transferase</keyword>
<evidence type="ECO:0000255" key="1">
    <source>
        <dbReference type="HAMAP-Rule" id="MF_01513"/>
    </source>
</evidence>